<organism>
    <name type="scientific">Staphylococcus aureus (strain USA300 / TCH1516)</name>
    <dbReference type="NCBI Taxonomy" id="451516"/>
    <lineage>
        <taxon>Bacteria</taxon>
        <taxon>Bacillati</taxon>
        <taxon>Bacillota</taxon>
        <taxon>Bacilli</taxon>
        <taxon>Bacillales</taxon>
        <taxon>Staphylococcaceae</taxon>
        <taxon>Staphylococcus</taxon>
    </lineage>
</organism>
<reference key="1">
    <citation type="journal article" date="2007" name="BMC Microbiol.">
        <title>Subtle genetic changes enhance virulence of methicillin resistant and sensitive Staphylococcus aureus.</title>
        <authorList>
            <person name="Highlander S.K."/>
            <person name="Hulten K.G."/>
            <person name="Qin X."/>
            <person name="Jiang H."/>
            <person name="Yerrapragada S."/>
            <person name="Mason E.O. Jr."/>
            <person name="Shang Y."/>
            <person name="Williams T.M."/>
            <person name="Fortunov R.M."/>
            <person name="Liu Y."/>
            <person name="Igboeli O."/>
            <person name="Petrosino J."/>
            <person name="Tirumalai M."/>
            <person name="Uzman A."/>
            <person name="Fox G.E."/>
            <person name="Cardenas A.M."/>
            <person name="Muzny D.M."/>
            <person name="Hemphill L."/>
            <person name="Ding Y."/>
            <person name="Dugan S."/>
            <person name="Blyth P.R."/>
            <person name="Buhay C.J."/>
            <person name="Dinh H.H."/>
            <person name="Hawes A.C."/>
            <person name="Holder M."/>
            <person name="Kovar C.L."/>
            <person name="Lee S.L."/>
            <person name="Liu W."/>
            <person name="Nazareth L.V."/>
            <person name="Wang Q."/>
            <person name="Zhou J."/>
            <person name="Kaplan S.L."/>
            <person name="Weinstock G.M."/>
        </authorList>
    </citation>
    <scope>NUCLEOTIDE SEQUENCE [LARGE SCALE GENOMIC DNA]</scope>
    <source>
        <strain>USA300 / TCH1516</strain>
    </source>
</reference>
<accession>A8Z1X0</accession>
<keyword id="KW-0067">ATP-binding</keyword>
<keyword id="KW-0319">Glycerol metabolism</keyword>
<keyword id="KW-0418">Kinase</keyword>
<keyword id="KW-0547">Nucleotide-binding</keyword>
<keyword id="KW-0597">Phosphoprotein</keyword>
<keyword id="KW-0808">Transferase</keyword>
<gene>
    <name evidence="1" type="primary">glpK</name>
    <name type="ordered locus">USA300HOU_1231</name>
</gene>
<evidence type="ECO:0000255" key="1">
    <source>
        <dbReference type="HAMAP-Rule" id="MF_00186"/>
    </source>
</evidence>
<comment type="function">
    <text evidence="1">Key enzyme in the regulation of glycerol uptake and metabolism. Catalyzes the phosphorylation of glycerol to yield sn-glycerol 3-phosphate.</text>
</comment>
<comment type="catalytic activity">
    <reaction evidence="1">
        <text>glycerol + ATP = sn-glycerol 3-phosphate + ADP + H(+)</text>
        <dbReference type="Rhea" id="RHEA:21644"/>
        <dbReference type="ChEBI" id="CHEBI:15378"/>
        <dbReference type="ChEBI" id="CHEBI:17754"/>
        <dbReference type="ChEBI" id="CHEBI:30616"/>
        <dbReference type="ChEBI" id="CHEBI:57597"/>
        <dbReference type="ChEBI" id="CHEBI:456216"/>
        <dbReference type="EC" id="2.7.1.30"/>
    </reaction>
</comment>
<comment type="activity regulation">
    <text evidence="1">Activated by phosphorylation and inhibited by fructose 1,6-bisphosphate (FBP).</text>
</comment>
<comment type="pathway">
    <text evidence="1">Polyol metabolism; glycerol degradation via glycerol kinase pathway; sn-glycerol 3-phosphate from glycerol: step 1/1.</text>
</comment>
<comment type="subunit">
    <text evidence="1">Homotetramer and homodimer (in equilibrium).</text>
</comment>
<comment type="PTM">
    <text evidence="1">The phosphoenolpyruvate-dependent sugar phosphotransferase system (PTS), including enzyme I, and histidine-containing protein (HPr) are required for the phosphorylation, which leads to the activation of the enzyme.</text>
</comment>
<comment type="similarity">
    <text evidence="1">Belongs to the FGGY kinase family.</text>
</comment>
<feature type="chain" id="PRO_1000077434" description="Glycerol kinase">
    <location>
        <begin position="1"/>
        <end position="498"/>
    </location>
</feature>
<feature type="binding site" evidence="1">
    <location>
        <position position="12"/>
    </location>
    <ligand>
        <name>ADP</name>
        <dbReference type="ChEBI" id="CHEBI:456216"/>
    </ligand>
</feature>
<feature type="binding site" evidence="1">
    <location>
        <position position="12"/>
    </location>
    <ligand>
        <name>ATP</name>
        <dbReference type="ChEBI" id="CHEBI:30616"/>
    </ligand>
</feature>
<feature type="binding site" evidence="1">
    <location>
        <position position="12"/>
    </location>
    <ligand>
        <name>sn-glycerol 3-phosphate</name>
        <dbReference type="ChEBI" id="CHEBI:57597"/>
    </ligand>
</feature>
<feature type="binding site" evidence="1">
    <location>
        <position position="13"/>
    </location>
    <ligand>
        <name>ATP</name>
        <dbReference type="ChEBI" id="CHEBI:30616"/>
    </ligand>
</feature>
<feature type="binding site" evidence="1">
    <location>
        <position position="14"/>
    </location>
    <ligand>
        <name>ATP</name>
        <dbReference type="ChEBI" id="CHEBI:30616"/>
    </ligand>
</feature>
<feature type="binding site" evidence="1">
    <location>
        <position position="16"/>
    </location>
    <ligand>
        <name>ADP</name>
        <dbReference type="ChEBI" id="CHEBI:456216"/>
    </ligand>
</feature>
<feature type="binding site" evidence="1">
    <location>
        <position position="82"/>
    </location>
    <ligand>
        <name>glycerol</name>
        <dbReference type="ChEBI" id="CHEBI:17754"/>
    </ligand>
</feature>
<feature type="binding site" evidence="1">
    <location>
        <position position="82"/>
    </location>
    <ligand>
        <name>sn-glycerol 3-phosphate</name>
        <dbReference type="ChEBI" id="CHEBI:57597"/>
    </ligand>
</feature>
<feature type="binding site" evidence="1">
    <location>
        <position position="83"/>
    </location>
    <ligand>
        <name>glycerol</name>
        <dbReference type="ChEBI" id="CHEBI:17754"/>
    </ligand>
</feature>
<feature type="binding site" evidence="1">
    <location>
        <position position="83"/>
    </location>
    <ligand>
        <name>sn-glycerol 3-phosphate</name>
        <dbReference type="ChEBI" id="CHEBI:57597"/>
    </ligand>
</feature>
<feature type="binding site" evidence="1">
    <location>
        <position position="134"/>
    </location>
    <ligand>
        <name>glycerol</name>
        <dbReference type="ChEBI" id="CHEBI:17754"/>
    </ligand>
</feature>
<feature type="binding site" evidence="1">
    <location>
        <position position="134"/>
    </location>
    <ligand>
        <name>sn-glycerol 3-phosphate</name>
        <dbReference type="ChEBI" id="CHEBI:57597"/>
    </ligand>
</feature>
<feature type="binding site" evidence="1">
    <location>
        <position position="244"/>
    </location>
    <ligand>
        <name>glycerol</name>
        <dbReference type="ChEBI" id="CHEBI:17754"/>
    </ligand>
</feature>
<feature type="binding site" evidence="1">
    <location>
        <position position="244"/>
    </location>
    <ligand>
        <name>sn-glycerol 3-phosphate</name>
        <dbReference type="ChEBI" id="CHEBI:57597"/>
    </ligand>
</feature>
<feature type="binding site" evidence="1">
    <location>
        <position position="245"/>
    </location>
    <ligand>
        <name>glycerol</name>
        <dbReference type="ChEBI" id="CHEBI:17754"/>
    </ligand>
</feature>
<feature type="binding site" evidence="1">
    <location>
        <position position="266"/>
    </location>
    <ligand>
        <name>ADP</name>
        <dbReference type="ChEBI" id="CHEBI:456216"/>
    </ligand>
</feature>
<feature type="binding site" evidence="1">
    <location>
        <position position="266"/>
    </location>
    <ligand>
        <name>ATP</name>
        <dbReference type="ChEBI" id="CHEBI:30616"/>
    </ligand>
</feature>
<feature type="binding site" evidence="1">
    <location>
        <position position="309"/>
    </location>
    <ligand>
        <name>ADP</name>
        <dbReference type="ChEBI" id="CHEBI:456216"/>
    </ligand>
</feature>
<feature type="binding site" evidence="1">
    <location>
        <position position="309"/>
    </location>
    <ligand>
        <name>ATP</name>
        <dbReference type="ChEBI" id="CHEBI:30616"/>
    </ligand>
</feature>
<feature type="binding site" evidence="1">
    <location>
        <position position="313"/>
    </location>
    <ligand>
        <name>ATP</name>
        <dbReference type="ChEBI" id="CHEBI:30616"/>
    </ligand>
</feature>
<feature type="binding site" evidence="1">
    <location>
        <position position="410"/>
    </location>
    <ligand>
        <name>ADP</name>
        <dbReference type="ChEBI" id="CHEBI:456216"/>
    </ligand>
</feature>
<feature type="binding site" evidence="1">
    <location>
        <position position="410"/>
    </location>
    <ligand>
        <name>ATP</name>
        <dbReference type="ChEBI" id="CHEBI:30616"/>
    </ligand>
</feature>
<feature type="binding site" evidence="1">
    <location>
        <position position="414"/>
    </location>
    <ligand>
        <name>ADP</name>
        <dbReference type="ChEBI" id="CHEBI:456216"/>
    </ligand>
</feature>
<feature type="modified residue" description="Phosphohistidine; by HPr" evidence="1">
    <location>
        <position position="230"/>
    </location>
</feature>
<sequence length="498" mass="55626">MEKYILSIDQGTTSSRAILFNQKGEIAGVAQREFKQYFPQSGWVEHDANEIWTSVLAVMTEVINENDVRADQIAGIGITNQRETTVVWDKHTGRPIYHAIVWQSRQTQSICSELKQQGYEQTFRDKTGLLLDPYFAGTKVKWILDNVEGAREKAENGDLLFGTIDTWLVWKLSGKAAHITDYSNASRTLMFNIHDLEWDDELLELLTVPKNMLPEVKASSEVYGKTIDYHFYGQEVPIAGVAGDQQAALFGQACFERGDVKNTYGTGGFMLMNTGDKAVKSESGLLTTIAYGIDGKVNYALEGSIFVSGSAIQWLRDGLRMINSAPQSESYATRVDSTEGVYVVPAFVGLGTPYWDSEARGAIFGLTRGTEKEHFIRATLESLCYQTRDVMEAMSKDSGIDVQSLRVDGGAVKNNFIMQFQADIVNTSVERPEIQETTALGAAFLAGLAVGFWESKDDIAKNWKLEEKFDPKMDEGEREKLYRGWKKAVEATQVFKTE</sequence>
<dbReference type="EC" id="2.7.1.30" evidence="1"/>
<dbReference type="EMBL" id="CP000730">
    <property type="protein sequence ID" value="ABX29245.1"/>
    <property type="molecule type" value="Genomic_DNA"/>
</dbReference>
<dbReference type="RefSeq" id="WP_000417369.1">
    <property type="nucleotide sequence ID" value="NC_010079.1"/>
</dbReference>
<dbReference type="SMR" id="A8Z1X0"/>
<dbReference type="KEGG" id="sax:USA300HOU_1231"/>
<dbReference type="HOGENOM" id="CLU_009281_2_3_9"/>
<dbReference type="UniPathway" id="UPA00618">
    <property type="reaction ID" value="UER00672"/>
</dbReference>
<dbReference type="GO" id="GO:0005829">
    <property type="term" value="C:cytosol"/>
    <property type="evidence" value="ECO:0007669"/>
    <property type="project" value="TreeGrafter"/>
</dbReference>
<dbReference type="GO" id="GO:0005524">
    <property type="term" value="F:ATP binding"/>
    <property type="evidence" value="ECO:0007669"/>
    <property type="project" value="UniProtKB-UniRule"/>
</dbReference>
<dbReference type="GO" id="GO:0004370">
    <property type="term" value="F:glycerol kinase activity"/>
    <property type="evidence" value="ECO:0000250"/>
    <property type="project" value="UniProtKB"/>
</dbReference>
<dbReference type="GO" id="GO:0019563">
    <property type="term" value="P:glycerol catabolic process"/>
    <property type="evidence" value="ECO:0007669"/>
    <property type="project" value="UniProtKB-UniRule"/>
</dbReference>
<dbReference type="GO" id="GO:0006071">
    <property type="term" value="P:glycerol metabolic process"/>
    <property type="evidence" value="ECO:0000250"/>
    <property type="project" value="UniProtKB"/>
</dbReference>
<dbReference type="GO" id="GO:0006072">
    <property type="term" value="P:glycerol-3-phosphate metabolic process"/>
    <property type="evidence" value="ECO:0007669"/>
    <property type="project" value="InterPro"/>
</dbReference>
<dbReference type="CDD" id="cd07786">
    <property type="entry name" value="FGGY_EcGK_like"/>
    <property type="match status" value="1"/>
</dbReference>
<dbReference type="FunFam" id="3.30.420.40:FF:000007">
    <property type="entry name" value="Glycerol kinase"/>
    <property type="match status" value="1"/>
</dbReference>
<dbReference type="FunFam" id="3.30.420.40:FF:000008">
    <property type="entry name" value="Glycerol kinase"/>
    <property type="match status" value="1"/>
</dbReference>
<dbReference type="Gene3D" id="3.30.420.40">
    <property type="match status" value="2"/>
</dbReference>
<dbReference type="HAMAP" id="MF_00186">
    <property type="entry name" value="Glycerol_kin"/>
    <property type="match status" value="1"/>
</dbReference>
<dbReference type="InterPro" id="IPR043129">
    <property type="entry name" value="ATPase_NBD"/>
</dbReference>
<dbReference type="InterPro" id="IPR000577">
    <property type="entry name" value="Carb_kinase_FGGY"/>
</dbReference>
<dbReference type="InterPro" id="IPR018483">
    <property type="entry name" value="Carb_kinase_FGGY_CS"/>
</dbReference>
<dbReference type="InterPro" id="IPR018485">
    <property type="entry name" value="FGGY_C"/>
</dbReference>
<dbReference type="InterPro" id="IPR018484">
    <property type="entry name" value="FGGY_N"/>
</dbReference>
<dbReference type="InterPro" id="IPR005999">
    <property type="entry name" value="Glycerol_kin"/>
</dbReference>
<dbReference type="NCBIfam" id="TIGR01311">
    <property type="entry name" value="glycerol_kin"/>
    <property type="match status" value="1"/>
</dbReference>
<dbReference type="NCBIfam" id="NF000756">
    <property type="entry name" value="PRK00047.1"/>
    <property type="match status" value="1"/>
</dbReference>
<dbReference type="PANTHER" id="PTHR10196:SF69">
    <property type="entry name" value="GLYCEROL KINASE"/>
    <property type="match status" value="1"/>
</dbReference>
<dbReference type="PANTHER" id="PTHR10196">
    <property type="entry name" value="SUGAR KINASE"/>
    <property type="match status" value="1"/>
</dbReference>
<dbReference type="Pfam" id="PF02782">
    <property type="entry name" value="FGGY_C"/>
    <property type="match status" value="1"/>
</dbReference>
<dbReference type="Pfam" id="PF00370">
    <property type="entry name" value="FGGY_N"/>
    <property type="match status" value="1"/>
</dbReference>
<dbReference type="PIRSF" id="PIRSF000538">
    <property type="entry name" value="GlpK"/>
    <property type="match status" value="1"/>
</dbReference>
<dbReference type="SUPFAM" id="SSF53067">
    <property type="entry name" value="Actin-like ATPase domain"/>
    <property type="match status" value="2"/>
</dbReference>
<dbReference type="PROSITE" id="PS00445">
    <property type="entry name" value="FGGY_KINASES_2"/>
    <property type="match status" value="1"/>
</dbReference>
<name>GLPK_STAAT</name>
<proteinExistence type="inferred from homology"/>
<protein>
    <recommendedName>
        <fullName evidence="1">Glycerol kinase</fullName>
        <ecNumber evidence="1">2.7.1.30</ecNumber>
    </recommendedName>
    <alternativeName>
        <fullName evidence="1">ATP:glycerol 3-phosphotransferase</fullName>
    </alternativeName>
    <alternativeName>
        <fullName evidence="1">Glycerokinase</fullName>
        <shortName evidence="1">GK</shortName>
    </alternativeName>
</protein>